<feature type="chain" id="PRO_0000202871" description="Protein PXR1">
    <location>
        <begin position="1"/>
        <end position="271"/>
    </location>
</feature>
<feature type="domain" description="G-patch" evidence="1">
    <location>
        <begin position="25"/>
        <end position="72"/>
    </location>
</feature>
<feature type="region of interest" description="Disordered" evidence="2">
    <location>
        <begin position="147"/>
        <end position="239"/>
    </location>
</feature>
<feature type="compositionally biased region" description="Acidic residues" evidence="2">
    <location>
        <begin position="157"/>
        <end position="168"/>
    </location>
</feature>
<feature type="compositionally biased region" description="Basic residues" evidence="2">
    <location>
        <begin position="175"/>
        <end position="203"/>
    </location>
</feature>
<feature type="compositionally biased region" description="Basic and acidic residues" evidence="2">
    <location>
        <begin position="204"/>
        <end position="221"/>
    </location>
</feature>
<feature type="modified residue" description="Phosphoserine" evidence="9">
    <location>
        <position position="230"/>
    </location>
</feature>
<feature type="sequence conflict" description="In Ref. 1; AAM18461." evidence="8" ref="1">
    <original>N</original>
    <variation>H</variation>
    <location>
        <position position="148"/>
    </location>
</feature>
<feature type="sequence conflict" description="In Ref. 1; AAM18461." evidence="8" ref="1">
    <original>K</original>
    <variation>N</variation>
    <location>
        <position position="151"/>
    </location>
</feature>
<feature type="sequence conflict" description="In Ref. 1; AAM18461." evidence="8" ref="1">
    <original>DDK</original>
    <variation>ADQ</variation>
    <location>
        <begin position="165"/>
        <end position="167"/>
    </location>
</feature>
<feature type="sequence conflict" description="In Ref. 1; AAM18461." evidence="8" ref="1">
    <original>D</original>
    <variation>A</variation>
    <location>
        <position position="193"/>
    </location>
</feature>
<feature type="strand" evidence="10">
    <location>
        <begin position="127"/>
        <end position="132"/>
    </location>
</feature>
<organism>
    <name type="scientific">Saccharomyces cerevisiae (strain ATCC 204508 / S288c)</name>
    <name type="common">Baker's yeast</name>
    <dbReference type="NCBI Taxonomy" id="559292"/>
    <lineage>
        <taxon>Eukaryota</taxon>
        <taxon>Fungi</taxon>
        <taxon>Dikarya</taxon>
        <taxon>Ascomycota</taxon>
        <taxon>Saccharomycotina</taxon>
        <taxon>Saccharomycetes</taxon>
        <taxon>Saccharomycetales</taxon>
        <taxon>Saccharomycetaceae</taxon>
        <taxon>Saccharomyces</taxon>
    </lineage>
</organism>
<gene>
    <name type="primary">PXR1</name>
    <name type="synonym">GNO1</name>
    <name type="ordered locus">YGR280C</name>
</gene>
<keyword id="KW-0002">3D-structure</keyword>
<keyword id="KW-0539">Nucleus</keyword>
<keyword id="KW-0597">Phosphoprotein</keyword>
<keyword id="KW-1185">Reference proteome</keyword>
<keyword id="KW-0690">Ribosome biogenesis</keyword>
<keyword id="KW-0698">rRNA processing</keyword>
<name>PXR1_YEAST</name>
<sequence length="271" mass="31312">MGLAATRTKQRFGLDPRNTAWSNDTSRFGHQFLEKFGWKPGMGLGLSPMNSNTSHIKVSIKDDNVGLGAKLKRKDKKDEFDNGECAGLDVFQRILGRLNGKESKISEELDTQRKQKIIDGKWGIHFVKGEVLASTWDPKTHKLRNYSNAKKRKREGDDSEDEDDDDKEDKDSDKKKHKKHKKHKKDKKKDKKDKKEHKKHKKEEKRLKKEKRAEKTKETKKTSKLKSSESASNIPDAVNTRLSVRSKWIKQKRAALMDSKALNEIFMITND</sequence>
<accession>P53335</accession>
<accession>D6VV57</accession>
<accession>Q8TG89</accession>
<comment type="function">
    <text evidence="3 6 7">Involved in rRNA-processing at A0, A1 and A2 sites through its action in U18 and U24 snoRNA 3'-end final trimming. Negative regulator of telomerase through competition for binding to EST2 with TLC1.</text>
</comment>
<comment type="subunit">
    <text evidence="6">Interacts with EST2.</text>
</comment>
<comment type="interaction">
    <interactant intactId="EBI-23652">
        <id>P53335</id>
    </interactant>
    <interactant intactId="EBI-9533">
        <id>P15790</id>
        <label>CKA1</label>
    </interactant>
    <organismsDiffer>false</organismsDiffer>
    <experiments>2</experiments>
</comment>
<comment type="interaction">
    <interactant intactId="EBI-23652">
        <id>P53335</id>
    </interactant>
    <interactant intactId="EBI-505">
        <id>P53131</id>
        <label>PRP43</label>
    </interactant>
    <organismsDiffer>false</organismsDiffer>
    <experiments>7</experiments>
</comment>
<comment type="subcellular location">
    <subcellularLocation>
        <location evidence="3 4">Nucleus</location>
        <location evidence="3 4">Nucleolus</location>
    </subcellularLocation>
</comment>
<comment type="miscellaneous">
    <text evidence="5">Present with 3850 molecules/cell in log phase SD medium.</text>
</comment>
<comment type="similarity">
    <text evidence="8">Belongs to the PINX1 family.</text>
</comment>
<dbReference type="EMBL" id="AF432905">
    <property type="protein sequence ID" value="AAM18461.1"/>
    <property type="molecule type" value="mRNA"/>
</dbReference>
<dbReference type="EMBL" id="Z73065">
    <property type="protein sequence ID" value="CAA97311.1"/>
    <property type="molecule type" value="Genomic_DNA"/>
</dbReference>
<dbReference type="EMBL" id="AY558384">
    <property type="protein sequence ID" value="AAS56710.1"/>
    <property type="molecule type" value="Genomic_DNA"/>
</dbReference>
<dbReference type="EMBL" id="BK006941">
    <property type="protein sequence ID" value="DAA08368.1"/>
    <property type="molecule type" value="Genomic_DNA"/>
</dbReference>
<dbReference type="PIR" id="S64615">
    <property type="entry name" value="S64615"/>
</dbReference>
<dbReference type="RefSeq" id="NP_011796.1">
    <property type="nucleotide sequence ID" value="NM_001181409.1"/>
</dbReference>
<dbReference type="PDB" id="8RDY">
    <property type="method" value="EM"/>
    <property type="resolution" value="3.33 A"/>
    <property type="chains" value="B=1-137"/>
</dbReference>
<dbReference type="PDBsum" id="8RDY"/>
<dbReference type="EMDB" id="EMD-19078"/>
<dbReference type="SMR" id="P53335"/>
<dbReference type="BioGRID" id="33530">
    <property type="interactions" value="78"/>
</dbReference>
<dbReference type="DIP" id="DIP-4308N"/>
<dbReference type="FunCoup" id="P53335">
    <property type="interactions" value="300"/>
</dbReference>
<dbReference type="IntAct" id="P53335">
    <property type="interactions" value="33"/>
</dbReference>
<dbReference type="MINT" id="P53335"/>
<dbReference type="STRING" id="4932.YGR280C"/>
<dbReference type="iPTMnet" id="P53335"/>
<dbReference type="PaxDb" id="4932-YGR280C"/>
<dbReference type="PeptideAtlas" id="P53335"/>
<dbReference type="EnsemblFungi" id="YGR280C_mRNA">
    <property type="protein sequence ID" value="YGR280C"/>
    <property type="gene ID" value="YGR280C"/>
</dbReference>
<dbReference type="GeneID" id="853197"/>
<dbReference type="KEGG" id="sce:YGR280C"/>
<dbReference type="AGR" id="SGD:S000003512"/>
<dbReference type="SGD" id="S000003512">
    <property type="gene designation" value="PXR1"/>
</dbReference>
<dbReference type="VEuPathDB" id="FungiDB:YGR280C"/>
<dbReference type="eggNOG" id="KOG2809">
    <property type="taxonomic scope" value="Eukaryota"/>
</dbReference>
<dbReference type="HOGENOM" id="CLU_052839_0_0_1"/>
<dbReference type="InParanoid" id="P53335"/>
<dbReference type="OMA" id="PCWDQSS"/>
<dbReference type="OrthoDB" id="29523at2759"/>
<dbReference type="BioCyc" id="YEAST:G3O-30943-MONOMER"/>
<dbReference type="BioGRID-ORCS" id="853197">
    <property type="hits" value="5 hits in 10 CRISPR screens"/>
</dbReference>
<dbReference type="CD-CODE" id="BDAE0F88">
    <property type="entry name" value="Nucleolus"/>
</dbReference>
<dbReference type="PRO" id="PR:P53335"/>
<dbReference type="Proteomes" id="UP000002311">
    <property type="component" value="Chromosome VII"/>
</dbReference>
<dbReference type="RNAct" id="P53335">
    <property type="molecule type" value="protein"/>
</dbReference>
<dbReference type="GO" id="GO:0005730">
    <property type="term" value="C:nucleolus"/>
    <property type="evidence" value="ECO:0000314"/>
    <property type="project" value="SGD"/>
</dbReference>
<dbReference type="GO" id="GO:0005654">
    <property type="term" value="C:nucleoplasm"/>
    <property type="evidence" value="ECO:0000314"/>
    <property type="project" value="SGD"/>
</dbReference>
<dbReference type="GO" id="GO:0032040">
    <property type="term" value="C:small-subunit processome"/>
    <property type="evidence" value="ECO:0000353"/>
    <property type="project" value="ComplexPortal"/>
</dbReference>
<dbReference type="GO" id="GO:0008047">
    <property type="term" value="F:enzyme activator activity"/>
    <property type="evidence" value="ECO:0000315"/>
    <property type="project" value="SGD"/>
</dbReference>
<dbReference type="GO" id="GO:0003676">
    <property type="term" value="F:nucleic acid binding"/>
    <property type="evidence" value="ECO:0007669"/>
    <property type="project" value="InterPro"/>
</dbReference>
<dbReference type="GO" id="GO:0010521">
    <property type="term" value="F:telomerase inhibitor activity"/>
    <property type="evidence" value="ECO:0000315"/>
    <property type="project" value="SGD"/>
</dbReference>
<dbReference type="GO" id="GO:0000494">
    <property type="term" value="P:box C/D sno(s)RNA 3'-end processing"/>
    <property type="evidence" value="ECO:0000315"/>
    <property type="project" value="SGD"/>
</dbReference>
<dbReference type="GO" id="GO:0030490">
    <property type="term" value="P:maturation of SSU-rRNA"/>
    <property type="evidence" value="ECO:0000303"/>
    <property type="project" value="ComplexPortal"/>
</dbReference>
<dbReference type="GO" id="GO:0032211">
    <property type="term" value="P:negative regulation of telomere maintenance via telomerase"/>
    <property type="evidence" value="ECO:0000315"/>
    <property type="project" value="SGD"/>
</dbReference>
<dbReference type="InterPro" id="IPR000467">
    <property type="entry name" value="G_patch_dom"/>
</dbReference>
<dbReference type="InterPro" id="IPR050656">
    <property type="entry name" value="PINX1"/>
</dbReference>
<dbReference type="PANTHER" id="PTHR23149">
    <property type="entry name" value="G PATCH DOMAIN CONTAINING PROTEIN"/>
    <property type="match status" value="1"/>
</dbReference>
<dbReference type="PANTHER" id="PTHR23149:SF31">
    <property type="entry name" value="PROTEIN PXR1"/>
    <property type="match status" value="1"/>
</dbReference>
<dbReference type="Pfam" id="PF01585">
    <property type="entry name" value="G-patch"/>
    <property type="match status" value="1"/>
</dbReference>
<dbReference type="SMART" id="SM00443">
    <property type="entry name" value="G_patch"/>
    <property type="match status" value="1"/>
</dbReference>
<dbReference type="PROSITE" id="PS50174">
    <property type="entry name" value="G_PATCH"/>
    <property type="match status" value="1"/>
</dbReference>
<reference key="1">
    <citation type="journal article" date="2001" name="Cell">
        <title>The Pin2/TRF1-interacting protein PinX1 is a potent telomerase inhibitor.</title>
        <authorList>
            <person name="Zhou X.Z."/>
            <person name="Lu K.P."/>
        </authorList>
    </citation>
    <scope>NUCLEOTIDE SEQUENCE [MRNA]</scope>
</reference>
<reference key="2">
    <citation type="journal article" date="1997" name="Yeast">
        <title>Sequence analysis of a near-subtelomeric 35.4 kb DNA segment on the right arm of chromosome VII from Saccharomyces cerevisiae carrying the MAL1 locus reveals 15 complete open reading frames, including ZUO1, BGL2 and BIO2 genes and an ABC transporter gene.</title>
        <authorList>
            <person name="Volckaert G."/>
            <person name="Voet M."/>
            <person name="Robben J."/>
        </authorList>
    </citation>
    <scope>NUCLEOTIDE SEQUENCE [GENOMIC DNA]</scope>
    <source>
        <strain>ATCC 96604 / S288c / FY1679</strain>
    </source>
</reference>
<reference key="3">
    <citation type="journal article" date="1997" name="Nature">
        <title>The nucleotide sequence of Saccharomyces cerevisiae chromosome VII.</title>
        <authorList>
            <person name="Tettelin H."/>
            <person name="Agostoni-Carbone M.L."/>
            <person name="Albermann K."/>
            <person name="Albers M."/>
            <person name="Arroyo J."/>
            <person name="Backes U."/>
            <person name="Barreiros T."/>
            <person name="Bertani I."/>
            <person name="Bjourson A.J."/>
            <person name="Brueckner M."/>
            <person name="Bruschi C.V."/>
            <person name="Carignani G."/>
            <person name="Castagnoli L."/>
            <person name="Cerdan E."/>
            <person name="Clemente M.L."/>
            <person name="Coblenz A."/>
            <person name="Coglievina M."/>
            <person name="Coissac E."/>
            <person name="Defoor E."/>
            <person name="Del Bino S."/>
            <person name="Delius H."/>
            <person name="Delneri D."/>
            <person name="de Wergifosse P."/>
            <person name="Dujon B."/>
            <person name="Durand P."/>
            <person name="Entian K.-D."/>
            <person name="Eraso P."/>
            <person name="Escribano V."/>
            <person name="Fabiani L."/>
            <person name="Fartmann B."/>
            <person name="Feroli F."/>
            <person name="Feuermann M."/>
            <person name="Frontali L."/>
            <person name="Garcia-Gonzalez M."/>
            <person name="Garcia-Saez M.I."/>
            <person name="Goffeau A."/>
            <person name="Guerreiro P."/>
            <person name="Hani J."/>
            <person name="Hansen M."/>
            <person name="Hebling U."/>
            <person name="Hernandez K."/>
            <person name="Heumann K."/>
            <person name="Hilger F."/>
            <person name="Hofmann B."/>
            <person name="Indge K.J."/>
            <person name="James C.M."/>
            <person name="Klima R."/>
            <person name="Koetter P."/>
            <person name="Kramer B."/>
            <person name="Kramer W."/>
            <person name="Lauquin G."/>
            <person name="Leuther H."/>
            <person name="Louis E.J."/>
            <person name="Maillier E."/>
            <person name="Marconi A."/>
            <person name="Martegani E."/>
            <person name="Mazon M.J."/>
            <person name="Mazzoni C."/>
            <person name="McReynolds A.D.K."/>
            <person name="Melchioretto P."/>
            <person name="Mewes H.-W."/>
            <person name="Minenkova O."/>
            <person name="Mueller-Auer S."/>
            <person name="Nawrocki A."/>
            <person name="Netter P."/>
            <person name="Neu R."/>
            <person name="Nombela C."/>
            <person name="Oliver S.G."/>
            <person name="Panzeri L."/>
            <person name="Paoluzi S."/>
            <person name="Plevani P."/>
            <person name="Portetelle D."/>
            <person name="Portillo F."/>
            <person name="Potier S."/>
            <person name="Purnelle B."/>
            <person name="Rieger M."/>
            <person name="Riles L."/>
            <person name="Rinaldi T."/>
            <person name="Robben J."/>
            <person name="Rodrigues-Pousada C."/>
            <person name="Rodriguez-Belmonte E."/>
            <person name="Rodriguez-Torres A.M."/>
            <person name="Rose M."/>
            <person name="Ruzzi M."/>
            <person name="Saliola M."/>
            <person name="Sanchez-Perez M."/>
            <person name="Schaefer B."/>
            <person name="Schaefer M."/>
            <person name="Scharfe M."/>
            <person name="Schmidheini T."/>
            <person name="Schreer A."/>
            <person name="Skala J."/>
            <person name="Souciet J.-L."/>
            <person name="Steensma H.Y."/>
            <person name="Talla E."/>
            <person name="Thierry A."/>
            <person name="Vandenbol M."/>
            <person name="van der Aart Q.J.M."/>
            <person name="Van Dyck L."/>
            <person name="Vanoni M."/>
            <person name="Verhasselt P."/>
            <person name="Voet M."/>
            <person name="Volckaert G."/>
            <person name="Wambutt R."/>
            <person name="Watson M.D."/>
            <person name="Weber N."/>
            <person name="Wedler E."/>
            <person name="Wedler H."/>
            <person name="Wipfli P."/>
            <person name="Wolf K."/>
            <person name="Wright L.F."/>
            <person name="Zaccaria P."/>
            <person name="Zimmermann M."/>
            <person name="Zollner A."/>
            <person name="Kleine K."/>
        </authorList>
    </citation>
    <scope>NUCLEOTIDE SEQUENCE [LARGE SCALE GENOMIC DNA]</scope>
    <source>
        <strain>ATCC 204508 / S288c</strain>
    </source>
</reference>
<reference key="4">
    <citation type="journal article" date="2014" name="G3 (Bethesda)">
        <title>The reference genome sequence of Saccharomyces cerevisiae: Then and now.</title>
        <authorList>
            <person name="Engel S.R."/>
            <person name="Dietrich F.S."/>
            <person name="Fisk D.G."/>
            <person name="Binkley G."/>
            <person name="Balakrishnan R."/>
            <person name="Costanzo M.C."/>
            <person name="Dwight S.S."/>
            <person name="Hitz B.C."/>
            <person name="Karra K."/>
            <person name="Nash R.S."/>
            <person name="Weng S."/>
            <person name="Wong E.D."/>
            <person name="Lloyd P."/>
            <person name="Skrzypek M.S."/>
            <person name="Miyasato S.R."/>
            <person name="Simison M."/>
            <person name="Cherry J.M."/>
        </authorList>
    </citation>
    <scope>GENOME REANNOTATION</scope>
    <source>
        <strain>ATCC 204508 / S288c</strain>
    </source>
</reference>
<reference key="5">
    <citation type="journal article" date="2007" name="Genome Res.">
        <title>Approaching a complete repository of sequence-verified protein-encoding clones for Saccharomyces cerevisiae.</title>
        <authorList>
            <person name="Hu Y."/>
            <person name="Rolfs A."/>
            <person name="Bhullar B."/>
            <person name="Murthy T.V.S."/>
            <person name="Zhu C."/>
            <person name="Berger M.F."/>
            <person name="Camargo A.A."/>
            <person name="Kelley F."/>
            <person name="McCarron S."/>
            <person name="Jepson D."/>
            <person name="Richardson A."/>
            <person name="Raphael J."/>
            <person name="Moreira D."/>
            <person name="Taycher E."/>
            <person name="Zuo D."/>
            <person name="Mohr S."/>
            <person name="Kane M.F."/>
            <person name="Williamson J."/>
            <person name="Simpson A.J.G."/>
            <person name="Bulyk M.L."/>
            <person name="Harlow E."/>
            <person name="Marsischky G."/>
            <person name="Kolodner R.D."/>
            <person name="LaBaer J."/>
        </authorList>
    </citation>
    <scope>NUCLEOTIDE SEQUENCE [GENOMIC DNA]</scope>
    <source>
        <strain>ATCC 204508 / S288c</strain>
    </source>
</reference>
<reference key="6">
    <citation type="journal article" date="2002" name="J. Biol. Chem.">
        <title>The yeast homolog of human PinX1 is involved in rRNA and small nucleolar RNA maturation, not in telomere elongation inhibition.</title>
        <authorList>
            <person name="Guglielmi B."/>
            <person name="Werner M."/>
        </authorList>
    </citation>
    <scope>FUNCTION</scope>
    <scope>SUBCELLULAR LOCATION</scope>
</reference>
<reference key="7">
    <citation type="journal article" date="2003" name="Nature">
        <title>Global analysis of protein localization in budding yeast.</title>
        <authorList>
            <person name="Huh W.-K."/>
            <person name="Falvo J.V."/>
            <person name="Gerke L.C."/>
            <person name="Carroll A.S."/>
            <person name="Howson R.W."/>
            <person name="Weissman J.S."/>
            <person name="O'Shea E.K."/>
        </authorList>
    </citation>
    <scope>SUBCELLULAR LOCATION [LARGE SCALE ANALYSIS]</scope>
</reference>
<reference key="8">
    <citation type="journal article" date="2003" name="Nature">
        <title>Global analysis of protein expression in yeast.</title>
        <authorList>
            <person name="Ghaemmaghami S."/>
            <person name="Huh W.-K."/>
            <person name="Bower K."/>
            <person name="Howson R.W."/>
            <person name="Belle A."/>
            <person name="Dephoure N."/>
            <person name="O'Shea E.K."/>
            <person name="Weissman J.S."/>
        </authorList>
    </citation>
    <scope>LEVEL OF PROTEIN EXPRESSION [LARGE SCALE ANALYSIS]</scope>
</reference>
<reference key="9">
    <citation type="journal article" date="2004" name="Genes Dev.">
        <title>Nucleolar protein PinX1p regulates telomerase by sequestering its protein catalytic subunit in an inactive complex lacking telomerase RNA.</title>
        <authorList>
            <person name="Lin J."/>
            <person name="Blackburn E.H."/>
        </authorList>
    </citation>
    <scope>FUNCTION</scope>
    <scope>INTERACTION WITH EST2</scope>
</reference>
<reference key="10">
    <citation type="journal article" date="2006" name="Yeast">
        <title>The budding yeast rRNA and ribosome biosynthesis (RRB) regulon contains over 200 genes.</title>
        <authorList>
            <person name="Wade C.H."/>
            <person name="Umbarger M.A."/>
            <person name="McAlear M.A."/>
        </authorList>
    </citation>
    <scope>FUNCTION</scope>
</reference>
<reference key="11">
    <citation type="journal article" date="2008" name="Mol. Cell. Proteomics">
        <title>A multidimensional chromatography technology for in-depth phosphoproteome analysis.</title>
        <authorList>
            <person name="Albuquerque C.P."/>
            <person name="Smolka M.B."/>
            <person name="Payne S.H."/>
            <person name="Bafna V."/>
            <person name="Eng J."/>
            <person name="Zhou H."/>
        </authorList>
    </citation>
    <scope>PHOSPHORYLATION [LARGE SCALE ANALYSIS] AT SER-230</scope>
    <scope>IDENTIFICATION BY MASS SPECTROMETRY [LARGE SCALE ANALYSIS]</scope>
</reference>
<reference key="12">
    <citation type="journal article" date="2009" name="Science">
        <title>Global analysis of Cdk1 substrate phosphorylation sites provides insights into evolution.</title>
        <authorList>
            <person name="Holt L.J."/>
            <person name="Tuch B.B."/>
            <person name="Villen J."/>
            <person name="Johnson A.D."/>
            <person name="Gygi S.P."/>
            <person name="Morgan D.O."/>
        </authorList>
    </citation>
    <scope>IDENTIFICATION BY MASS SPECTROMETRY [LARGE SCALE ANALYSIS]</scope>
</reference>
<evidence type="ECO:0000255" key="1">
    <source>
        <dbReference type="PROSITE-ProRule" id="PRU00092"/>
    </source>
</evidence>
<evidence type="ECO:0000256" key="2">
    <source>
        <dbReference type="SAM" id="MobiDB-lite"/>
    </source>
</evidence>
<evidence type="ECO:0000269" key="3">
    <source>
    </source>
</evidence>
<evidence type="ECO:0000269" key="4">
    <source>
    </source>
</evidence>
<evidence type="ECO:0000269" key="5">
    <source>
    </source>
</evidence>
<evidence type="ECO:0000269" key="6">
    <source>
    </source>
</evidence>
<evidence type="ECO:0000269" key="7">
    <source>
    </source>
</evidence>
<evidence type="ECO:0000305" key="8"/>
<evidence type="ECO:0007744" key="9">
    <source>
    </source>
</evidence>
<evidence type="ECO:0007829" key="10">
    <source>
        <dbReference type="PDB" id="8RDY"/>
    </source>
</evidence>
<proteinExistence type="evidence at protein level"/>
<protein>
    <recommendedName>
        <fullName>Protein PXR1</fullName>
    </recommendedName>
    <alternativeName>
        <fullName>G-patch nucleolar protein</fullName>
    </alternativeName>
    <alternativeName>
        <fullName>PinX1-related protein 1</fullName>
    </alternativeName>
</protein>